<comment type="function">
    <text evidence="1">Part of the Sec protein translocase complex. Interacts with the SecYEG preprotein conducting channel. Has a central role in coupling the hydrolysis of ATP to the transfer of proteins into and across the cell membrane, serving as an ATP-driven molecular motor driving the stepwise translocation of polypeptide chains across the membrane.</text>
</comment>
<comment type="catalytic activity">
    <reaction evidence="1">
        <text>ATP + H2O + cellular proteinSide 1 = ADP + phosphate + cellular proteinSide 2.</text>
        <dbReference type="EC" id="7.4.2.8"/>
    </reaction>
</comment>
<comment type="subunit">
    <text evidence="1">Monomer and homodimer. Part of the essential Sec protein translocation apparatus which comprises SecA, SecYEG and auxiliary proteins SecDF. Other proteins may also be involved.</text>
</comment>
<comment type="subcellular location">
    <subcellularLocation>
        <location evidence="1">Cell membrane</location>
        <topology evidence="1">Peripheral membrane protein</topology>
        <orientation evidence="1">Cytoplasmic side</orientation>
    </subcellularLocation>
    <subcellularLocation>
        <location evidence="1">Cytoplasm</location>
    </subcellularLocation>
    <text evidence="1">Distribution is 50-50.</text>
</comment>
<comment type="similarity">
    <text evidence="1">Belongs to the SecA family.</text>
</comment>
<protein>
    <recommendedName>
        <fullName evidence="1">Protein translocase subunit SecA 2</fullName>
        <ecNumber evidence="1">7.4.2.8</ecNumber>
    </recommendedName>
</protein>
<reference key="1">
    <citation type="journal article" date="2005" name="J. Bacteriol.">
        <title>Insights on evolution of virulence and resistance from the complete genome analysis of an early methicillin-resistant Staphylococcus aureus strain and a biofilm-producing methicillin-resistant Staphylococcus epidermidis strain.</title>
        <authorList>
            <person name="Gill S.R."/>
            <person name="Fouts D.E."/>
            <person name="Archer G.L."/>
            <person name="Mongodin E.F."/>
            <person name="DeBoy R.T."/>
            <person name="Ravel J."/>
            <person name="Paulsen I.T."/>
            <person name="Kolonay J.F."/>
            <person name="Brinkac L.M."/>
            <person name="Beanan M.J."/>
            <person name="Dodson R.J."/>
            <person name="Daugherty S.C."/>
            <person name="Madupu R."/>
            <person name="Angiuoli S.V."/>
            <person name="Durkin A.S."/>
            <person name="Haft D.H."/>
            <person name="Vamathevan J.J."/>
            <person name="Khouri H."/>
            <person name="Utterback T.R."/>
            <person name="Lee C."/>
            <person name="Dimitrov G."/>
            <person name="Jiang L."/>
            <person name="Qin H."/>
            <person name="Weidman J."/>
            <person name="Tran K."/>
            <person name="Kang K.H."/>
            <person name="Hance I.R."/>
            <person name="Nelson K.E."/>
            <person name="Fraser C.M."/>
        </authorList>
    </citation>
    <scope>NUCLEOTIDE SEQUENCE [LARGE SCALE GENOMIC DNA]</scope>
    <source>
        <strain>ATCC 35984 / DSM 28319 / BCRC 17069 / CCUG 31568 / BM 3577 / RP62A</strain>
    </source>
</reference>
<accession>Q5HKR6</accession>
<proteinExistence type="inferred from homology"/>
<evidence type="ECO:0000255" key="1">
    <source>
        <dbReference type="HAMAP-Rule" id="MF_01382"/>
    </source>
</evidence>
<keyword id="KW-0067">ATP-binding</keyword>
<keyword id="KW-1003">Cell membrane</keyword>
<keyword id="KW-0963">Cytoplasm</keyword>
<keyword id="KW-0472">Membrane</keyword>
<keyword id="KW-0547">Nucleotide-binding</keyword>
<keyword id="KW-0653">Protein transport</keyword>
<keyword id="KW-1185">Reference proteome</keyword>
<keyword id="KW-1278">Translocase</keyword>
<keyword id="KW-0811">Translocation</keyword>
<keyword id="KW-0813">Transport</keyword>
<organism>
    <name type="scientific">Staphylococcus epidermidis (strain ATCC 35984 / DSM 28319 / BCRC 17069 / CCUG 31568 / BM 3577 / RP62A)</name>
    <dbReference type="NCBI Taxonomy" id="176279"/>
    <lineage>
        <taxon>Bacteria</taxon>
        <taxon>Bacillati</taxon>
        <taxon>Bacillota</taxon>
        <taxon>Bacilli</taxon>
        <taxon>Bacillales</taxon>
        <taxon>Staphylococcaceae</taxon>
        <taxon>Staphylococcus</taxon>
    </lineage>
</organism>
<feature type="chain" id="PRO_0000318433" description="Protein translocase subunit SecA 2">
    <location>
        <begin position="1"/>
        <end position="796"/>
    </location>
</feature>
<feature type="binding site" evidence="1">
    <location>
        <position position="84"/>
    </location>
    <ligand>
        <name>ATP</name>
        <dbReference type="ChEBI" id="CHEBI:30616"/>
    </ligand>
</feature>
<feature type="binding site" evidence="1">
    <location>
        <begin position="102"/>
        <end position="106"/>
    </location>
    <ligand>
        <name>ATP</name>
        <dbReference type="ChEBI" id="CHEBI:30616"/>
    </ligand>
</feature>
<feature type="binding site" evidence="1">
    <location>
        <position position="496"/>
    </location>
    <ligand>
        <name>ATP</name>
        <dbReference type="ChEBI" id="CHEBI:30616"/>
    </ligand>
</feature>
<gene>
    <name evidence="1" type="primary">secA2</name>
    <name type="ordered locus">SERP2276</name>
</gene>
<sequence>MAKGVNQIINNIRLRKLRKILNQINALSEEFSNFSDEALQAKTKEFKVYLNDNKASLNHILPQAYATVREASKRVLGMYPKDVQILGAIAMHQGNIAEMQTGEGKTLTATMPLYLNALTGKGAYLITTNDYLAKRDFLEMKPLYEWLGLSVSLGFVDIPEYEYAENEKYELYHHDIVYTTNGRLGFDYLIDNLADDIRAKFLPKLNFAIIDEVDSIILDAAQTPLVISGAPRVQSNLFHIVKTFVETLEKDKDFIVNFNKKEVWLTDEGSEKASHYFKVNSIYQQQYFDLVRMIHLSLRAKYLFKYNLDYFIFDGEIVLIDRITGRMLPGTKLQSGLHQAIEALENVEISQDMSVMATITFQNLFKQFDEFSGMTGTGKLGEKEFFDLYSKVVIEIPTHSPIERDDRPDRVFANGDKKNDAILKTVIGIHETQQPVLLITRTAEAAEYFSAELFKRDIPNNLLIAQNVAKEAQMIAEAGQLSAVTVATSMAGRGTDIKLSKEVHDIGGLAVIINEHMDNSRVDRQLRGRSGRQGDPGYSQIFVSLDDDLVKRWSNSNLAENKNLQTMDASKLESSALFKKRVKSIVNKAQRVSEETAMKNREMANEFEKSISVQRDKIYAERNHILEASDFDDFNFEQLARDVFTKDVKNLDLSSERALVNYIYENLSFVFDEDVSNINMQNDEEIIQFLIQQFTQQFNNRLEVAADSYLKLRFIQKSILKAIDSEWIEQVDNLQQLKASVNNRQNGQRNVIFEYHKVALETYEYMSEDIKRKMVRNLCLSILAFDKDGDMVIHFP</sequence>
<name>SECA2_STAEQ</name>
<dbReference type="EC" id="7.4.2.8" evidence="1"/>
<dbReference type="EMBL" id="CP000029">
    <property type="protein sequence ID" value="AAW53145.1"/>
    <property type="molecule type" value="Genomic_DNA"/>
</dbReference>
<dbReference type="RefSeq" id="WP_001832960.1">
    <property type="nucleotide sequence ID" value="NC_002976.3"/>
</dbReference>
<dbReference type="SMR" id="Q5HKR6"/>
<dbReference type="STRING" id="176279.SERP2276"/>
<dbReference type="KEGG" id="ser:SERP2276"/>
<dbReference type="eggNOG" id="COG0653">
    <property type="taxonomic scope" value="Bacteria"/>
</dbReference>
<dbReference type="HOGENOM" id="CLU_005314_3_2_9"/>
<dbReference type="Proteomes" id="UP000000531">
    <property type="component" value="Chromosome"/>
</dbReference>
<dbReference type="GO" id="GO:0031522">
    <property type="term" value="C:cell envelope Sec protein transport complex"/>
    <property type="evidence" value="ECO:0007669"/>
    <property type="project" value="TreeGrafter"/>
</dbReference>
<dbReference type="GO" id="GO:0005829">
    <property type="term" value="C:cytosol"/>
    <property type="evidence" value="ECO:0007669"/>
    <property type="project" value="TreeGrafter"/>
</dbReference>
<dbReference type="GO" id="GO:0005886">
    <property type="term" value="C:plasma membrane"/>
    <property type="evidence" value="ECO:0007669"/>
    <property type="project" value="UniProtKB-SubCell"/>
</dbReference>
<dbReference type="GO" id="GO:0005524">
    <property type="term" value="F:ATP binding"/>
    <property type="evidence" value="ECO:0007669"/>
    <property type="project" value="UniProtKB-UniRule"/>
</dbReference>
<dbReference type="GO" id="GO:0008564">
    <property type="term" value="F:protein-exporting ATPase activity"/>
    <property type="evidence" value="ECO:0007669"/>
    <property type="project" value="UniProtKB-EC"/>
</dbReference>
<dbReference type="GO" id="GO:0065002">
    <property type="term" value="P:intracellular protein transmembrane transport"/>
    <property type="evidence" value="ECO:0007669"/>
    <property type="project" value="UniProtKB-UniRule"/>
</dbReference>
<dbReference type="GO" id="GO:0017038">
    <property type="term" value="P:protein import"/>
    <property type="evidence" value="ECO:0007669"/>
    <property type="project" value="InterPro"/>
</dbReference>
<dbReference type="GO" id="GO:0006605">
    <property type="term" value="P:protein targeting"/>
    <property type="evidence" value="ECO:0007669"/>
    <property type="project" value="UniProtKB-UniRule"/>
</dbReference>
<dbReference type="GO" id="GO:0043952">
    <property type="term" value="P:protein transport by the Sec complex"/>
    <property type="evidence" value="ECO:0007669"/>
    <property type="project" value="TreeGrafter"/>
</dbReference>
<dbReference type="CDD" id="cd17928">
    <property type="entry name" value="DEXDc_SecA"/>
    <property type="match status" value="1"/>
</dbReference>
<dbReference type="CDD" id="cd18803">
    <property type="entry name" value="SF2_C_secA"/>
    <property type="match status" value="1"/>
</dbReference>
<dbReference type="FunFam" id="3.40.50.300:FF:000429">
    <property type="entry name" value="Preprotein translocase subunit SecA"/>
    <property type="match status" value="1"/>
</dbReference>
<dbReference type="Gene3D" id="1.10.3060.10">
    <property type="entry name" value="Helical scaffold and wing domains of SecA"/>
    <property type="match status" value="1"/>
</dbReference>
<dbReference type="Gene3D" id="3.40.50.300">
    <property type="entry name" value="P-loop containing nucleotide triphosphate hydrolases"/>
    <property type="match status" value="2"/>
</dbReference>
<dbReference type="Gene3D" id="3.90.1440.10">
    <property type="entry name" value="SecA, preprotein cross-linking domain"/>
    <property type="match status" value="1"/>
</dbReference>
<dbReference type="HAMAP" id="MF_01382">
    <property type="entry name" value="SecA"/>
    <property type="match status" value="1"/>
</dbReference>
<dbReference type="InterPro" id="IPR014001">
    <property type="entry name" value="Helicase_ATP-bd"/>
</dbReference>
<dbReference type="InterPro" id="IPR001650">
    <property type="entry name" value="Helicase_C-like"/>
</dbReference>
<dbReference type="InterPro" id="IPR027417">
    <property type="entry name" value="P-loop_NTPase"/>
</dbReference>
<dbReference type="InterPro" id="IPR000185">
    <property type="entry name" value="SecA"/>
</dbReference>
<dbReference type="InterPro" id="IPR022490">
    <property type="entry name" value="SecA2"/>
</dbReference>
<dbReference type="InterPro" id="IPR011115">
    <property type="entry name" value="SecA_DEAD"/>
</dbReference>
<dbReference type="InterPro" id="IPR014018">
    <property type="entry name" value="SecA_motor_DEAD"/>
</dbReference>
<dbReference type="InterPro" id="IPR011130">
    <property type="entry name" value="SecA_preprotein_X-link_dom"/>
</dbReference>
<dbReference type="InterPro" id="IPR044722">
    <property type="entry name" value="SecA_SF2_C"/>
</dbReference>
<dbReference type="InterPro" id="IPR011116">
    <property type="entry name" value="SecA_Wing/Scaffold"/>
</dbReference>
<dbReference type="InterPro" id="IPR036266">
    <property type="entry name" value="SecA_Wing/Scaffold_sf"/>
</dbReference>
<dbReference type="InterPro" id="IPR036670">
    <property type="entry name" value="SecA_X-link_sf"/>
</dbReference>
<dbReference type="NCBIfam" id="NF006630">
    <property type="entry name" value="PRK09200.1"/>
    <property type="match status" value="1"/>
</dbReference>
<dbReference type="NCBIfam" id="TIGR03714">
    <property type="entry name" value="secA2"/>
    <property type="match status" value="1"/>
</dbReference>
<dbReference type="PANTHER" id="PTHR30612:SF0">
    <property type="entry name" value="CHLOROPLAST PROTEIN-TRANSPORTING ATPASE"/>
    <property type="match status" value="1"/>
</dbReference>
<dbReference type="PANTHER" id="PTHR30612">
    <property type="entry name" value="SECA INNER MEMBRANE COMPONENT OF SEC PROTEIN SECRETION SYSTEM"/>
    <property type="match status" value="1"/>
</dbReference>
<dbReference type="Pfam" id="PF21090">
    <property type="entry name" value="P-loop_SecA"/>
    <property type="match status" value="1"/>
</dbReference>
<dbReference type="Pfam" id="PF07517">
    <property type="entry name" value="SecA_DEAD"/>
    <property type="match status" value="1"/>
</dbReference>
<dbReference type="Pfam" id="PF01043">
    <property type="entry name" value="SecA_PP_bind"/>
    <property type="match status" value="1"/>
</dbReference>
<dbReference type="Pfam" id="PF07516">
    <property type="entry name" value="SecA_SW"/>
    <property type="match status" value="1"/>
</dbReference>
<dbReference type="PRINTS" id="PR00906">
    <property type="entry name" value="SECA"/>
</dbReference>
<dbReference type="SMART" id="SM00957">
    <property type="entry name" value="SecA_DEAD"/>
    <property type="match status" value="1"/>
</dbReference>
<dbReference type="SMART" id="SM00958">
    <property type="entry name" value="SecA_PP_bind"/>
    <property type="match status" value="1"/>
</dbReference>
<dbReference type="SUPFAM" id="SSF81886">
    <property type="entry name" value="Helical scaffold and wing domains of SecA"/>
    <property type="match status" value="1"/>
</dbReference>
<dbReference type="SUPFAM" id="SSF52540">
    <property type="entry name" value="P-loop containing nucleoside triphosphate hydrolases"/>
    <property type="match status" value="2"/>
</dbReference>
<dbReference type="SUPFAM" id="SSF81767">
    <property type="entry name" value="Pre-protein crosslinking domain of SecA"/>
    <property type="match status" value="1"/>
</dbReference>
<dbReference type="PROSITE" id="PS51196">
    <property type="entry name" value="SECA_MOTOR_DEAD"/>
    <property type="match status" value="1"/>
</dbReference>